<organism>
    <name type="scientific">Rhyparobia maderae</name>
    <name type="common">Madeira cockroach</name>
    <name type="synonym">Leucophaea maderae</name>
    <dbReference type="NCBI Taxonomy" id="36963"/>
    <lineage>
        <taxon>Eukaryota</taxon>
        <taxon>Metazoa</taxon>
        <taxon>Ecdysozoa</taxon>
        <taxon>Arthropoda</taxon>
        <taxon>Hexapoda</taxon>
        <taxon>Insecta</taxon>
        <taxon>Pterygota</taxon>
        <taxon>Neoptera</taxon>
        <taxon>Polyneoptera</taxon>
        <taxon>Dictyoptera</taxon>
        <taxon>Blattodea</taxon>
        <taxon>Blaberoidea</taxon>
        <taxon>Blaberidae</taxon>
        <taxon>Oxyhaloinae</taxon>
        <taxon>Rhyparobia</taxon>
    </lineage>
</organism>
<protein>
    <recommendedName>
        <fullName>Leucosulfakinin-2</fullName>
    </recommendedName>
    <alternativeName>
        <fullName>Leucosulfakinin-II</fullName>
        <shortName>LSK-II</shortName>
    </alternativeName>
</protein>
<feature type="peptide" id="PRO_0000043894" description="Leucosulfakinin-2">
    <location>
        <begin position="1"/>
        <end position="10"/>
    </location>
</feature>
<feature type="modified residue" description="Pyrrolidone carboxylic acid" evidence="1">
    <location>
        <position position="1"/>
    </location>
</feature>
<feature type="modified residue" description="Sulfotyrosine" evidence="1">
    <location>
        <position position="5"/>
    </location>
</feature>
<feature type="modified residue" description="Phenylalanine amide" evidence="1">
    <location>
        <position position="10"/>
    </location>
</feature>
<sequence length="10" mass="1255">QSDDYGHMRF</sequence>
<reference key="1">
    <citation type="journal article" date="1986" name="Biochem. Biophys. Res. Commun.">
        <title>Leucosulfakinin-II, a blocked sulfated insect neuropeptide with homology to cholecystokinin and gastrin.</title>
        <authorList>
            <person name="Nachman R.J."/>
            <person name="Holman G.M."/>
            <person name="Cook B.J."/>
            <person name="Haddon W.F."/>
            <person name="Ling N."/>
        </authorList>
    </citation>
    <scope>PROTEIN SEQUENCE</scope>
    <scope>PYROGLUTAMATE FORMATION AT GLN-1</scope>
    <scope>SULFATION AT TYR-5</scope>
    <scope>AMIDATION AT PHE-10</scope>
</reference>
<keyword id="KW-0027">Amidation</keyword>
<keyword id="KW-0903">Direct protein sequencing</keyword>
<keyword id="KW-0372">Hormone</keyword>
<keyword id="KW-0527">Neuropeptide</keyword>
<keyword id="KW-0873">Pyrrolidone carboxylic acid</keyword>
<keyword id="KW-0964">Secreted</keyword>
<keyword id="KW-0765">Sulfation</keyword>
<dbReference type="PIR" id="A26335">
    <property type="entry name" value="GMROL2"/>
</dbReference>
<dbReference type="GO" id="GO:0005576">
    <property type="term" value="C:extracellular region"/>
    <property type="evidence" value="ECO:0007669"/>
    <property type="project" value="UniProtKB-SubCell"/>
</dbReference>
<dbReference type="GO" id="GO:0005179">
    <property type="term" value="F:hormone activity"/>
    <property type="evidence" value="ECO:0007669"/>
    <property type="project" value="UniProtKB-KW"/>
</dbReference>
<dbReference type="GO" id="GO:0007218">
    <property type="term" value="P:neuropeptide signaling pathway"/>
    <property type="evidence" value="ECO:0007669"/>
    <property type="project" value="UniProtKB-KW"/>
</dbReference>
<dbReference type="InterPro" id="IPR013152">
    <property type="entry name" value="Gastrin/cholecystokinin_CS"/>
</dbReference>
<dbReference type="InterPro" id="IPR013259">
    <property type="entry name" value="Sulfakinin"/>
</dbReference>
<dbReference type="Pfam" id="PF08257">
    <property type="entry name" value="Sulfakinin"/>
    <property type="match status" value="1"/>
</dbReference>
<dbReference type="PROSITE" id="PS00259">
    <property type="entry name" value="GASTRIN"/>
    <property type="match status" value="1"/>
</dbReference>
<proteinExistence type="evidence at protein level"/>
<comment type="function">
    <text>Changes the frequency and amplitude of contractions of the cockroach hingut. Stimulates muscle contraction of hindgut.</text>
</comment>
<comment type="subcellular location">
    <subcellularLocation>
        <location>Secreted</location>
    </subcellularLocation>
</comment>
<comment type="similarity">
    <text evidence="2">Belongs to the gastrin/cholecystokinin family.</text>
</comment>
<name>LSK2_RHYMA</name>
<evidence type="ECO:0000269" key="1">
    <source>
    </source>
</evidence>
<evidence type="ECO:0000305" key="2"/>
<accession>P67802</accession>
<accession>P09039</accession>